<dbReference type="EC" id="3.5.3.6" evidence="1"/>
<dbReference type="EMBL" id="BA000031">
    <property type="protein sequence ID" value="BAC60915.1"/>
    <property type="molecule type" value="Genomic_DNA"/>
</dbReference>
<dbReference type="RefSeq" id="NP_799031.1">
    <property type="nucleotide sequence ID" value="NC_004603.1"/>
</dbReference>
<dbReference type="RefSeq" id="WP_005455102.1">
    <property type="nucleotide sequence ID" value="NC_004603.1"/>
</dbReference>
<dbReference type="SMR" id="Q87LG0"/>
<dbReference type="GeneID" id="1190197"/>
<dbReference type="KEGG" id="vpa:VP2652"/>
<dbReference type="PATRIC" id="fig|223926.6.peg.2547"/>
<dbReference type="eggNOG" id="COG2235">
    <property type="taxonomic scope" value="Bacteria"/>
</dbReference>
<dbReference type="HOGENOM" id="CLU_052662_0_0_6"/>
<dbReference type="UniPathway" id="UPA00254">
    <property type="reaction ID" value="UER00364"/>
</dbReference>
<dbReference type="Proteomes" id="UP000002493">
    <property type="component" value="Chromosome 1"/>
</dbReference>
<dbReference type="GO" id="GO:0005737">
    <property type="term" value="C:cytoplasm"/>
    <property type="evidence" value="ECO:0007669"/>
    <property type="project" value="UniProtKB-SubCell"/>
</dbReference>
<dbReference type="GO" id="GO:0016990">
    <property type="term" value="F:arginine deiminase activity"/>
    <property type="evidence" value="ECO:0007669"/>
    <property type="project" value="UniProtKB-UniRule"/>
</dbReference>
<dbReference type="GO" id="GO:0019547">
    <property type="term" value="P:arginine catabolic process to ornithine"/>
    <property type="evidence" value="ECO:0007669"/>
    <property type="project" value="UniProtKB-UniRule"/>
</dbReference>
<dbReference type="GO" id="GO:0019546">
    <property type="term" value="P:arginine deiminase pathway"/>
    <property type="evidence" value="ECO:0007669"/>
    <property type="project" value="TreeGrafter"/>
</dbReference>
<dbReference type="FunFam" id="1.10.3930.10:FF:000002">
    <property type="entry name" value="Arginine deiminase"/>
    <property type="match status" value="1"/>
</dbReference>
<dbReference type="Gene3D" id="1.10.3930.10">
    <property type="entry name" value="Arginine deiminase"/>
    <property type="match status" value="1"/>
</dbReference>
<dbReference type="Gene3D" id="3.75.10.10">
    <property type="entry name" value="L-arginine/glycine Amidinotransferase, Chain A"/>
    <property type="match status" value="1"/>
</dbReference>
<dbReference type="HAMAP" id="MF_00242">
    <property type="entry name" value="Arg_deiminase"/>
    <property type="match status" value="1"/>
</dbReference>
<dbReference type="InterPro" id="IPR003876">
    <property type="entry name" value="Arg_deiminase"/>
</dbReference>
<dbReference type="NCBIfam" id="TIGR01078">
    <property type="entry name" value="arcA"/>
    <property type="match status" value="1"/>
</dbReference>
<dbReference type="NCBIfam" id="NF002381">
    <property type="entry name" value="PRK01388.1"/>
    <property type="match status" value="1"/>
</dbReference>
<dbReference type="PANTHER" id="PTHR47271">
    <property type="entry name" value="ARGININE DEIMINASE"/>
    <property type="match status" value="1"/>
</dbReference>
<dbReference type="PANTHER" id="PTHR47271:SF2">
    <property type="entry name" value="ARGININE DEIMINASE"/>
    <property type="match status" value="1"/>
</dbReference>
<dbReference type="Pfam" id="PF02274">
    <property type="entry name" value="ADI"/>
    <property type="match status" value="1"/>
</dbReference>
<dbReference type="PIRSF" id="PIRSF006356">
    <property type="entry name" value="Arg_deiminase"/>
    <property type="match status" value="1"/>
</dbReference>
<dbReference type="PRINTS" id="PR01466">
    <property type="entry name" value="ARGDEIMINASE"/>
</dbReference>
<dbReference type="SUPFAM" id="SSF55909">
    <property type="entry name" value="Pentein"/>
    <property type="match status" value="1"/>
</dbReference>
<comment type="catalytic activity">
    <reaction evidence="1">
        <text>L-arginine + H2O = L-citrulline + NH4(+)</text>
        <dbReference type="Rhea" id="RHEA:19597"/>
        <dbReference type="ChEBI" id="CHEBI:15377"/>
        <dbReference type="ChEBI" id="CHEBI:28938"/>
        <dbReference type="ChEBI" id="CHEBI:32682"/>
        <dbReference type="ChEBI" id="CHEBI:57743"/>
        <dbReference type="EC" id="3.5.3.6"/>
    </reaction>
</comment>
<comment type="pathway">
    <text evidence="1">Amino-acid degradation; L-arginine degradation via ADI pathway; carbamoyl phosphate from L-arginine: step 1/2.</text>
</comment>
<comment type="subcellular location">
    <subcellularLocation>
        <location evidence="1">Cytoplasm</location>
    </subcellularLocation>
</comment>
<comment type="similarity">
    <text evidence="1">Belongs to the arginine deiminase family.</text>
</comment>
<proteinExistence type="inferred from homology"/>
<accession>Q87LG0</accession>
<feature type="chain" id="PRO_0000182254" description="Arginine deiminase">
    <location>
        <begin position="1"/>
        <end position="407"/>
    </location>
</feature>
<feature type="active site" description="Amidino-cysteine intermediate" evidence="1">
    <location>
        <position position="397"/>
    </location>
</feature>
<sequence length="407" mass="45762">MSKLYVGSEVGQLRRVLLNRPERALTHLTPSNCHELLFDDVLAVEAAGEEHDAFARTLREQDVEVLLLHDLLVETLAVPEAKQWLLNTQISDFRYGPTFARDLRQYLLEMDDEHLATILLGGLAYSELPIQSSSMLPKMKRPLDFVIEPLPNHLFTRDTSCWVYGGVSLNPMMMPARQRETNHLRAIYRWHPIFAGQDFIKYFGDDDLHYDNANVEGGDVLVIGKGAVLIGMSERTTPQGVENLAASLFKAGQASEVIAIDLPKHRSCMHLDTVMTHMDVDTFSVYPEIMRKDLDTWRLTPKGTDGEMHVEASHNYLHAIESALGLDQLKIITTGGDSYEAEREQWNDANNVLTVKPGVVIGYERNVYTNEKYDKAGIQVLTVPGNELGRGRGGARCMSCPIERDDI</sequence>
<gene>
    <name evidence="1" type="primary">arcA</name>
    <name type="ordered locus">VP2652</name>
</gene>
<evidence type="ECO:0000255" key="1">
    <source>
        <dbReference type="HAMAP-Rule" id="MF_00242"/>
    </source>
</evidence>
<organism>
    <name type="scientific">Vibrio parahaemolyticus serotype O3:K6 (strain RIMD 2210633)</name>
    <dbReference type="NCBI Taxonomy" id="223926"/>
    <lineage>
        <taxon>Bacteria</taxon>
        <taxon>Pseudomonadati</taxon>
        <taxon>Pseudomonadota</taxon>
        <taxon>Gammaproteobacteria</taxon>
        <taxon>Vibrionales</taxon>
        <taxon>Vibrionaceae</taxon>
        <taxon>Vibrio</taxon>
    </lineage>
</organism>
<reference key="1">
    <citation type="journal article" date="2003" name="Lancet">
        <title>Genome sequence of Vibrio parahaemolyticus: a pathogenic mechanism distinct from that of V. cholerae.</title>
        <authorList>
            <person name="Makino K."/>
            <person name="Oshima K."/>
            <person name="Kurokawa K."/>
            <person name="Yokoyama K."/>
            <person name="Uda T."/>
            <person name="Tagomori K."/>
            <person name="Iijima Y."/>
            <person name="Najima M."/>
            <person name="Nakano M."/>
            <person name="Yamashita A."/>
            <person name="Kubota Y."/>
            <person name="Kimura S."/>
            <person name="Yasunaga T."/>
            <person name="Honda T."/>
            <person name="Shinagawa H."/>
            <person name="Hattori M."/>
            <person name="Iida T."/>
        </authorList>
    </citation>
    <scope>NUCLEOTIDE SEQUENCE [LARGE SCALE GENOMIC DNA]</scope>
    <source>
        <strain>RIMD 2210633</strain>
    </source>
</reference>
<protein>
    <recommendedName>
        <fullName evidence="1">Arginine deiminase</fullName>
        <shortName evidence="1">ADI</shortName>
        <ecNumber evidence="1">3.5.3.6</ecNumber>
    </recommendedName>
    <alternativeName>
        <fullName evidence="1">Arginine dihydrolase</fullName>
        <shortName evidence="1">AD</shortName>
    </alternativeName>
</protein>
<name>ARCA_VIBPA</name>
<keyword id="KW-0056">Arginine metabolism</keyword>
<keyword id="KW-0963">Cytoplasm</keyword>
<keyword id="KW-0378">Hydrolase</keyword>